<sequence length="398" mass="42886">MAVKVVMPKLGMAMKQGEVSIWNKKVGDPVEKGESIASIQSEKIEMEIEAPEKGTLIDIKVKEGEEVPPGTAICYIGDANESVQEEAGAPVAEDNMPQAVQPVKQENKPAASKKDRMKISPVARKIAEKAGLDLKQLKGTGPGGRIVKDDVTKALAEQKKDQAKPVSEQKAQEIPVTGMRKVIAARMQESLANSAQLTITMKADITKLATLQKQLSPTAEERYGTKLTITHFVSRAAVLALQAHPVLNSFYQNERIITHPHVHLGMAVALENGLVVPVIRHAEKLSLIELAQSISENAKKAREGRAGSEELQGSTFSITNLGAFGVEHFTPILNPPETGILGIGASYDTPVYQGEEIVRSTILPLSLTFDHRACDGAPAAAFLKAMKTYLEEPAALIL</sequence>
<gene>
    <name type="primary">acoC</name>
    <name type="synonym">yfjI</name>
    <name type="ordered locus">BSU08080</name>
</gene>
<protein>
    <recommendedName>
        <fullName>Dihydrolipoyllysine-residue acetyltransferase component of acetoin cleaving system</fullName>
        <ecNumber>2.3.1.12</ecNumber>
    </recommendedName>
    <alternativeName>
        <fullName>Acetoin dehydrogenase E2 component</fullName>
    </alternativeName>
    <alternativeName>
        <fullName>Dihydrolipoamide acetyltransferase component of acetoin cleaving system</fullName>
    </alternativeName>
</protein>
<reference key="1">
    <citation type="journal article" date="1996" name="Microbiology">
        <title>Cloning and sequencing of a 40.6 kb segment in the 73 degrees-76 degrees region of the Bacillus subtilis chromosome containing genes for trehalose metabolism and acetoin utilization.</title>
        <authorList>
            <person name="Yamamoto H."/>
            <person name="Uchiyama S."/>
            <person name="Sekiguchi J."/>
        </authorList>
    </citation>
    <scope>NUCLEOTIDE SEQUENCE [GENOMIC DNA]</scope>
    <source>
        <strain>168 / AC327</strain>
    </source>
</reference>
<reference key="2">
    <citation type="journal article" date="1997" name="Nature">
        <title>The complete genome sequence of the Gram-positive bacterium Bacillus subtilis.</title>
        <authorList>
            <person name="Kunst F."/>
            <person name="Ogasawara N."/>
            <person name="Moszer I."/>
            <person name="Albertini A.M."/>
            <person name="Alloni G."/>
            <person name="Azevedo V."/>
            <person name="Bertero M.G."/>
            <person name="Bessieres P."/>
            <person name="Bolotin A."/>
            <person name="Borchert S."/>
            <person name="Borriss R."/>
            <person name="Boursier L."/>
            <person name="Brans A."/>
            <person name="Braun M."/>
            <person name="Brignell S.C."/>
            <person name="Bron S."/>
            <person name="Brouillet S."/>
            <person name="Bruschi C.V."/>
            <person name="Caldwell B."/>
            <person name="Capuano V."/>
            <person name="Carter N.M."/>
            <person name="Choi S.-K."/>
            <person name="Codani J.-J."/>
            <person name="Connerton I.F."/>
            <person name="Cummings N.J."/>
            <person name="Daniel R.A."/>
            <person name="Denizot F."/>
            <person name="Devine K.M."/>
            <person name="Duesterhoeft A."/>
            <person name="Ehrlich S.D."/>
            <person name="Emmerson P.T."/>
            <person name="Entian K.-D."/>
            <person name="Errington J."/>
            <person name="Fabret C."/>
            <person name="Ferrari E."/>
            <person name="Foulger D."/>
            <person name="Fritz C."/>
            <person name="Fujita M."/>
            <person name="Fujita Y."/>
            <person name="Fuma S."/>
            <person name="Galizzi A."/>
            <person name="Galleron N."/>
            <person name="Ghim S.-Y."/>
            <person name="Glaser P."/>
            <person name="Goffeau A."/>
            <person name="Golightly E.J."/>
            <person name="Grandi G."/>
            <person name="Guiseppi G."/>
            <person name="Guy B.J."/>
            <person name="Haga K."/>
            <person name="Haiech J."/>
            <person name="Harwood C.R."/>
            <person name="Henaut A."/>
            <person name="Hilbert H."/>
            <person name="Holsappel S."/>
            <person name="Hosono S."/>
            <person name="Hullo M.-F."/>
            <person name="Itaya M."/>
            <person name="Jones L.-M."/>
            <person name="Joris B."/>
            <person name="Karamata D."/>
            <person name="Kasahara Y."/>
            <person name="Klaerr-Blanchard M."/>
            <person name="Klein C."/>
            <person name="Kobayashi Y."/>
            <person name="Koetter P."/>
            <person name="Koningstein G."/>
            <person name="Krogh S."/>
            <person name="Kumano M."/>
            <person name="Kurita K."/>
            <person name="Lapidus A."/>
            <person name="Lardinois S."/>
            <person name="Lauber J."/>
            <person name="Lazarevic V."/>
            <person name="Lee S.-M."/>
            <person name="Levine A."/>
            <person name="Liu H."/>
            <person name="Masuda S."/>
            <person name="Mauel C."/>
            <person name="Medigue C."/>
            <person name="Medina N."/>
            <person name="Mellado R.P."/>
            <person name="Mizuno M."/>
            <person name="Moestl D."/>
            <person name="Nakai S."/>
            <person name="Noback M."/>
            <person name="Noone D."/>
            <person name="O'Reilly M."/>
            <person name="Ogawa K."/>
            <person name="Ogiwara A."/>
            <person name="Oudega B."/>
            <person name="Park S.-H."/>
            <person name="Parro V."/>
            <person name="Pohl T.M."/>
            <person name="Portetelle D."/>
            <person name="Porwollik S."/>
            <person name="Prescott A.M."/>
            <person name="Presecan E."/>
            <person name="Pujic P."/>
            <person name="Purnelle B."/>
            <person name="Rapoport G."/>
            <person name="Rey M."/>
            <person name="Reynolds S."/>
            <person name="Rieger M."/>
            <person name="Rivolta C."/>
            <person name="Rocha E."/>
            <person name="Roche B."/>
            <person name="Rose M."/>
            <person name="Sadaie Y."/>
            <person name="Sato T."/>
            <person name="Scanlan E."/>
            <person name="Schleich S."/>
            <person name="Schroeter R."/>
            <person name="Scoffone F."/>
            <person name="Sekiguchi J."/>
            <person name="Sekowska A."/>
            <person name="Seror S.J."/>
            <person name="Serror P."/>
            <person name="Shin B.-S."/>
            <person name="Soldo B."/>
            <person name="Sorokin A."/>
            <person name="Tacconi E."/>
            <person name="Takagi T."/>
            <person name="Takahashi H."/>
            <person name="Takemaru K."/>
            <person name="Takeuchi M."/>
            <person name="Tamakoshi A."/>
            <person name="Tanaka T."/>
            <person name="Terpstra P."/>
            <person name="Tognoni A."/>
            <person name="Tosato V."/>
            <person name="Uchiyama S."/>
            <person name="Vandenbol M."/>
            <person name="Vannier F."/>
            <person name="Vassarotti A."/>
            <person name="Viari A."/>
            <person name="Wambutt R."/>
            <person name="Wedler E."/>
            <person name="Wedler H."/>
            <person name="Weitzenegger T."/>
            <person name="Winters P."/>
            <person name="Wipat A."/>
            <person name="Yamamoto H."/>
            <person name="Yamane K."/>
            <person name="Yasumoto K."/>
            <person name="Yata K."/>
            <person name="Yoshida K."/>
            <person name="Yoshikawa H.-F."/>
            <person name="Zumstein E."/>
            <person name="Yoshikawa H."/>
            <person name="Danchin A."/>
        </authorList>
    </citation>
    <scope>NUCLEOTIDE SEQUENCE [LARGE SCALE GENOMIC DNA]</scope>
    <source>
        <strain>168</strain>
    </source>
</reference>
<organism>
    <name type="scientific">Bacillus subtilis (strain 168)</name>
    <dbReference type="NCBI Taxonomy" id="224308"/>
    <lineage>
        <taxon>Bacteria</taxon>
        <taxon>Bacillati</taxon>
        <taxon>Bacillota</taxon>
        <taxon>Bacilli</taxon>
        <taxon>Bacillales</taxon>
        <taxon>Bacillaceae</taxon>
        <taxon>Bacillus</taxon>
    </lineage>
</organism>
<accession>O31550</accession>
<feature type="chain" id="PRO_0000162306" description="Dihydrolipoyllysine-residue acetyltransferase component of acetoin cleaving system">
    <location>
        <begin position="1"/>
        <end position="398"/>
    </location>
</feature>
<feature type="domain" description="Lipoyl-binding" evidence="3">
    <location>
        <begin position="2"/>
        <end position="77"/>
    </location>
</feature>
<feature type="domain" description="Peripheral subunit-binding (PSBD)" evidence="4">
    <location>
        <begin position="118"/>
        <end position="155"/>
    </location>
</feature>
<feature type="active site" evidence="2">
    <location>
        <position position="371"/>
    </location>
</feature>
<feature type="active site" evidence="2">
    <location>
        <position position="375"/>
    </location>
</feature>
<feature type="modified residue" description="N6-lipoyllysine" evidence="1 3">
    <location>
        <position position="43"/>
    </location>
</feature>
<comment type="catalytic activity">
    <reaction>
        <text>N(6)-[(R)-dihydrolipoyl]-L-lysyl-[protein] + acetyl-CoA = N(6)-[(R)-S(8)-acetyldihydrolipoyl]-L-lysyl-[protein] + CoA</text>
        <dbReference type="Rhea" id="RHEA:17017"/>
        <dbReference type="Rhea" id="RHEA-COMP:10475"/>
        <dbReference type="Rhea" id="RHEA-COMP:10478"/>
        <dbReference type="ChEBI" id="CHEBI:57287"/>
        <dbReference type="ChEBI" id="CHEBI:57288"/>
        <dbReference type="ChEBI" id="CHEBI:83100"/>
        <dbReference type="ChEBI" id="CHEBI:83111"/>
        <dbReference type="EC" id="2.3.1.12"/>
    </reaction>
</comment>
<comment type="cofactor">
    <cofactor evidence="1">
        <name>(R)-lipoate</name>
        <dbReference type="ChEBI" id="CHEBI:83088"/>
    </cofactor>
    <text evidence="1">Binds 1 lipoyl cofactor covalently.</text>
</comment>
<comment type="pathway">
    <text>Ketone degradation; acetoin degradation.</text>
</comment>
<comment type="similarity">
    <text evidence="5">Belongs to the 2-oxoacid dehydrogenase family.</text>
</comment>
<evidence type="ECO:0000250" key="1"/>
<evidence type="ECO:0000255" key="2"/>
<evidence type="ECO:0000255" key="3">
    <source>
        <dbReference type="PROSITE-ProRule" id="PRU01066"/>
    </source>
</evidence>
<evidence type="ECO:0000255" key="4">
    <source>
        <dbReference type="PROSITE-ProRule" id="PRU01170"/>
    </source>
</evidence>
<evidence type="ECO:0000305" key="5"/>
<name>ACOC_BACSU</name>
<proteinExistence type="inferred from homology"/>
<dbReference type="EC" id="2.3.1.12"/>
<dbReference type="EMBL" id="D78509">
    <property type="protein sequence ID" value="BAA24294.1"/>
    <property type="molecule type" value="Genomic_DNA"/>
</dbReference>
<dbReference type="EMBL" id="AL009126">
    <property type="protein sequence ID" value="CAB12637.1"/>
    <property type="molecule type" value="Genomic_DNA"/>
</dbReference>
<dbReference type="PIR" id="F69581">
    <property type="entry name" value="F69581"/>
</dbReference>
<dbReference type="RefSeq" id="NP_388689.1">
    <property type="nucleotide sequence ID" value="NC_000964.3"/>
</dbReference>
<dbReference type="RefSeq" id="WP_003244059.1">
    <property type="nucleotide sequence ID" value="NZ_OZ025638.1"/>
</dbReference>
<dbReference type="SMR" id="O31550"/>
<dbReference type="FunCoup" id="O31550">
    <property type="interactions" value="484"/>
</dbReference>
<dbReference type="IntAct" id="O31550">
    <property type="interactions" value="6"/>
</dbReference>
<dbReference type="STRING" id="224308.BSU08080"/>
<dbReference type="jPOST" id="O31550"/>
<dbReference type="PaxDb" id="224308-BSU08080"/>
<dbReference type="EnsemblBacteria" id="CAB12637">
    <property type="protein sequence ID" value="CAB12637"/>
    <property type="gene ID" value="BSU_08080"/>
</dbReference>
<dbReference type="GeneID" id="936147"/>
<dbReference type="KEGG" id="bsu:BSU08080"/>
<dbReference type="PATRIC" id="fig|224308.179.peg.874"/>
<dbReference type="eggNOG" id="COG0508">
    <property type="taxonomic scope" value="Bacteria"/>
</dbReference>
<dbReference type="InParanoid" id="O31550"/>
<dbReference type="OrthoDB" id="9805770at2"/>
<dbReference type="PhylomeDB" id="O31550"/>
<dbReference type="BioCyc" id="BSUB:BSU08080-MONOMER"/>
<dbReference type="UniPathway" id="UPA00040"/>
<dbReference type="Proteomes" id="UP000001570">
    <property type="component" value="Chromosome"/>
</dbReference>
<dbReference type="GO" id="GO:0004742">
    <property type="term" value="F:dihydrolipoyllysine-residue acetyltransferase activity"/>
    <property type="evidence" value="ECO:0007669"/>
    <property type="project" value="UniProtKB-EC"/>
</dbReference>
<dbReference type="GO" id="GO:0045150">
    <property type="term" value="P:acetoin catabolic process"/>
    <property type="evidence" value="ECO:0007669"/>
    <property type="project" value="UniProtKB-UniPathway"/>
</dbReference>
<dbReference type="CDD" id="cd06849">
    <property type="entry name" value="lipoyl_domain"/>
    <property type="match status" value="1"/>
</dbReference>
<dbReference type="FunFam" id="3.30.559.10:FF:000040">
    <property type="entry name" value="Dihydrolipoamide acetyltransferase component of pyruvate dehydrogenase complex"/>
    <property type="match status" value="1"/>
</dbReference>
<dbReference type="Gene3D" id="2.40.50.100">
    <property type="match status" value="1"/>
</dbReference>
<dbReference type="Gene3D" id="3.30.559.10">
    <property type="entry name" value="Chloramphenicol acetyltransferase-like domain"/>
    <property type="match status" value="1"/>
</dbReference>
<dbReference type="Gene3D" id="4.10.320.10">
    <property type="entry name" value="E3-binding domain"/>
    <property type="match status" value="1"/>
</dbReference>
<dbReference type="InterPro" id="IPR001078">
    <property type="entry name" value="2-oxoacid_DH_actylTfrase"/>
</dbReference>
<dbReference type="InterPro" id="IPR050743">
    <property type="entry name" value="2-oxoacid_DH_E2_comp"/>
</dbReference>
<dbReference type="InterPro" id="IPR000089">
    <property type="entry name" value="Biotin_lipoyl"/>
</dbReference>
<dbReference type="InterPro" id="IPR023213">
    <property type="entry name" value="CAT-like_dom_sf"/>
</dbReference>
<dbReference type="InterPro" id="IPR036625">
    <property type="entry name" value="E3-bd_dom_sf"/>
</dbReference>
<dbReference type="InterPro" id="IPR004167">
    <property type="entry name" value="PSBD"/>
</dbReference>
<dbReference type="InterPro" id="IPR011053">
    <property type="entry name" value="Single_hybrid_motif"/>
</dbReference>
<dbReference type="PANTHER" id="PTHR43178">
    <property type="entry name" value="DIHYDROLIPOAMIDE ACETYLTRANSFERASE COMPONENT OF PYRUVATE DEHYDROGENASE COMPLEX"/>
    <property type="match status" value="1"/>
</dbReference>
<dbReference type="PANTHER" id="PTHR43178:SF5">
    <property type="entry name" value="LIPOAMIDE ACYLTRANSFERASE COMPONENT OF BRANCHED-CHAIN ALPHA-KETO ACID DEHYDROGENASE COMPLEX, MITOCHONDRIAL"/>
    <property type="match status" value="1"/>
</dbReference>
<dbReference type="Pfam" id="PF00198">
    <property type="entry name" value="2-oxoacid_dh"/>
    <property type="match status" value="1"/>
</dbReference>
<dbReference type="Pfam" id="PF00364">
    <property type="entry name" value="Biotin_lipoyl"/>
    <property type="match status" value="1"/>
</dbReference>
<dbReference type="Pfam" id="PF02817">
    <property type="entry name" value="E3_binding"/>
    <property type="match status" value="1"/>
</dbReference>
<dbReference type="SUPFAM" id="SSF52777">
    <property type="entry name" value="CoA-dependent acyltransferases"/>
    <property type="match status" value="1"/>
</dbReference>
<dbReference type="SUPFAM" id="SSF47005">
    <property type="entry name" value="Peripheral subunit-binding domain of 2-oxo acid dehydrogenase complex"/>
    <property type="match status" value="1"/>
</dbReference>
<dbReference type="SUPFAM" id="SSF51230">
    <property type="entry name" value="Single hybrid motif"/>
    <property type="match status" value="1"/>
</dbReference>
<dbReference type="PROSITE" id="PS50968">
    <property type="entry name" value="BIOTINYL_LIPOYL"/>
    <property type="match status" value="1"/>
</dbReference>
<dbReference type="PROSITE" id="PS51826">
    <property type="entry name" value="PSBD"/>
    <property type="match status" value="1"/>
</dbReference>
<keyword id="KW-0006">Acetoin catabolism</keyword>
<keyword id="KW-0012">Acyltransferase</keyword>
<keyword id="KW-0450">Lipoyl</keyword>
<keyword id="KW-1185">Reference proteome</keyword>
<keyword id="KW-0808">Transferase</keyword>